<feature type="initiator methionine" description="Removed" evidence="1">
    <location>
        <position position="1"/>
    </location>
</feature>
<feature type="chain" id="PRO_0000201965" description="Septum site-determining protein MinD">
    <location>
        <begin position="2"/>
        <end position="270"/>
    </location>
</feature>
<feature type="binding site" evidence="2">
    <location>
        <begin position="11"/>
        <end position="18"/>
    </location>
    <ligand>
        <name>ATP</name>
        <dbReference type="ChEBI" id="CHEBI:30616"/>
    </ligand>
</feature>
<name>MIND_BUCAI</name>
<keyword id="KW-0067">ATP-binding</keyword>
<keyword id="KW-0131">Cell cycle</keyword>
<keyword id="KW-0132">Cell division</keyword>
<keyword id="KW-1003">Cell membrane</keyword>
<keyword id="KW-0472">Membrane</keyword>
<keyword id="KW-0547">Nucleotide-binding</keyword>
<keyword id="KW-1185">Reference proteome</keyword>
<keyword id="KW-0717">Septation</keyword>
<proteinExistence type="inferred from homology"/>
<organism>
    <name type="scientific">Buchnera aphidicola subsp. Acyrthosiphon pisum (strain APS)</name>
    <name type="common">Acyrthosiphon pisum symbiotic bacterium</name>
    <dbReference type="NCBI Taxonomy" id="107806"/>
    <lineage>
        <taxon>Bacteria</taxon>
        <taxon>Pseudomonadati</taxon>
        <taxon>Pseudomonadota</taxon>
        <taxon>Gammaproteobacteria</taxon>
        <taxon>Enterobacterales</taxon>
        <taxon>Erwiniaceae</taxon>
        <taxon>Buchnera</taxon>
    </lineage>
</organism>
<evidence type="ECO:0000250" key="1"/>
<evidence type="ECO:0000250" key="2">
    <source>
        <dbReference type="UniProtKB" id="Q72H90"/>
    </source>
</evidence>
<evidence type="ECO:0000305" key="3"/>
<accession>P57411</accession>
<reference key="1">
    <citation type="journal article" date="2000" name="Nature">
        <title>Genome sequence of the endocellular bacterial symbiont of aphids Buchnera sp. APS.</title>
        <authorList>
            <person name="Shigenobu S."/>
            <person name="Watanabe H."/>
            <person name="Hattori M."/>
            <person name="Sakaki Y."/>
            <person name="Ishikawa H."/>
        </authorList>
    </citation>
    <scope>NUCLEOTIDE SEQUENCE [LARGE SCALE GENOMIC DNA]</scope>
    <source>
        <strain>APS</strain>
    </source>
</reference>
<protein>
    <recommendedName>
        <fullName>Septum site-determining protein MinD</fullName>
    </recommendedName>
    <alternativeName>
        <fullName>Cell division inhibitor MinD</fullName>
    </alternativeName>
</protein>
<comment type="function">
    <text evidence="1">ATPase required for the correct placement of the division site. Cell division inhibitors MinC and MinD act in concert to form an inhibitor capable of blocking formation of the polar Z ring septums. Rapidly oscillates between the poles of the cell to destabilize FtsZ filaments that have formed before they mature into polar Z rings (By similarity).</text>
</comment>
<comment type="subunit">
    <text evidence="1">Interacts with MinC and FtsZ.</text>
</comment>
<comment type="subcellular location">
    <subcellularLocation>
        <location evidence="1">Cell membrane</location>
        <topology evidence="1">Peripheral membrane protein</topology>
    </subcellularLocation>
</comment>
<comment type="similarity">
    <text evidence="3">Belongs to the ParA family. MinD subfamily.</text>
</comment>
<gene>
    <name type="primary">minD</name>
    <name type="ordered locus">BU326</name>
</gene>
<sequence length="270" mass="29937">MTRIIVVTSGKGGVGKTTSSAAIGTGLAQKGKKTIVIDFDIGLRNLDLIMGCERRVVYDFINVIQGDATLNQAIIKDKKTNNLFILPASQTRDKDALTRIGVEKVLTELIKMNFDFIICDSPAGIETGAILAIYFADEAIITTNPEVSSVRDSDRILGIISSKSKRAEKNITPIKEYLLLTRYNPRRVKKGEMLSMTDVLDILQIPIIGVIPEDQSVLRASNQGESIILDINSNAGCAYSDTVNRLLGEERHFRFIEEEKKSFLRRLFGR</sequence>
<dbReference type="EMBL" id="BA000003">
    <property type="protein sequence ID" value="BAB13034.1"/>
    <property type="molecule type" value="Genomic_DNA"/>
</dbReference>
<dbReference type="RefSeq" id="NP_240148.1">
    <property type="nucleotide sequence ID" value="NC_002528.1"/>
</dbReference>
<dbReference type="RefSeq" id="WP_010896069.1">
    <property type="nucleotide sequence ID" value="NZ_AP036055.1"/>
</dbReference>
<dbReference type="SMR" id="P57411"/>
<dbReference type="STRING" id="563178.BUAP5A_319"/>
<dbReference type="EnsemblBacteria" id="BAB13034">
    <property type="protein sequence ID" value="BAB13034"/>
    <property type="gene ID" value="BAB13034"/>
</dbReference>
<dbReference type="KEGG" id="buc:BU326"/>
<dbReference type="PATRIC" id="fig|107806.10.peg.338"/>
<dbReference type="eggNOG" id="COG2894">
    <property type="taxonomic scope" value="Bacteria"/>
</dbReference>
<dbReference type="HOGENOM" id="CLU_037612_0_1_6"/>
<dbReference type="Proteomes" id="UP000001806">
    <property type="component" value="Chromosome"/>
</dbReference>
<dbReference type="GO" id="GO:0009898">
    <property type="term" value="C:cytoplasmic side of plasma membrane"/>
    <property type="evidence" value="ECO:0007669"/>
    <property type="project" value="TreeGrafter"/>
</dbReference>
<dbReference type="GO" id="GO:0005829">
    <property type="term" value="C:cytosol"/>
    <property type="evidence" value="ECO:0007669"/>
    <property type="project" value="TreeGrafter"/>
</dbReference>
<dbReference type="GO" id="GO:0005524">
    <property type="term" value="F:ATP binding"/>
    <property type="evidence" value="ECO:0007669"/>
    <property type="project" value="UniProtKB-KW"/>
</dbReference>
<dbReference type="GO" id="GO:0016887">
    <property type="term" value="F:ATP hydrolysis activity"/>
    <property type="evidence" value="ECO:0007669"/>
    <property type="project" value="InterPro"/>
</dbReference>
<dbReference type="GO" id="GO:0000917">
    <property type="term" value="P:division septum assembly"/>
    <property type="evidence" value="ECO:0007669"/>
    <property type="project" value="UniProtKB-KW"/>
</dbReference>
<dbReference type="GO" id="GO:0051782">
    <property type="term" value="P:negative regulation of cell division"/>
    <property type="evidence" value="ECO:0007669"/>
    <property type="project" value="TreeGrafter"/>
</dbReference>
<dbReference type="CDD" id="cd02036">
    <property type="entry name" value="MinD"/>
    <property type="match status" value="1"/>
</dbReference>
<dbReference type="FunFam" id="3.40.50.300:FF:000068">
    <property type="entry name" value="Site-determining protein"/>
    <property type="match status" value="1"/>
</dbReference>
<dbReference type="Gene3D" id="3.40.50.300">
    <property type="entry name" value="P-loop containing nucleotide triphosphate hydrolases"/>
    <property type="match status" value="1"/>
</dbReference>
<dbReference type="InterPro" id="IPR025669">
    <property type="entry name" value="AAA_dom"/>
</dbReference>
<dbReference type="InterPro" id="IPR010223">
    <property type="entry name" value="MinD"/>
</dbReference>
<dbReference type="InterPro" id="IPR025501">
    <property type="entry name" value="MinD_FleN"/>
</dbReference>
<dbReference type="InterPro" id="IPR027417">
    <property type="entry name" value="P-loop_NTPase"/>
</dbReference>
<dbReference type="InterPro" id="IPR050625">
    <property type="entry name" value="ParA/MinD_ATPase"/>
</dbReference>
<dbReference type="NCBIfam" id="TIGR01968">
    <property type="entry name" value="minD_bact"/>
    <property type="match status" value="1"/>
</dbReference>
<dbReference type="NCBIfam" id="NF008079">
    <property type="entry name" value="PRK10818.1"/>
    <property type="match status" value="1"/>
</dbReference>
<dbReference type="PANTHER" id="PTHR43384:SF6">
    <property type="entry name" value="SEPTUM SITE-DETERMINING PROTEIN MIND HOMOLOG, CHLOROPLASTIC"/>
    <property type="match status" value="1"/>
</dbReference>
<dbReference type="PANTHER" id="PTHR43384">
    <property type="entry name" value="SEPTUM SITE-DETERMINING PROTEIN MIND HOMOLOG, CHLOROPLASTIC-RELATED"/>
    <property type="match status" value="1"/>
</dbReference>
<dbReference type="Pfam" id="PF13614">
    <property type="entry name" value="AAA_31"/>
    <property type="match status" value="1"/>
</dbReference>
<dbReference type="PIRSF" id="PIRSF003092">
    <property type="entry name" value="MinD"/>
    <property type="match status" value="1"/>
</dbReference>
<dbReference type="SUPFAM" id="SSF52540">
    <property type="entry name" value="P-loop containing nucleoside triphosphate hydrolases"/>
    <property type="match status" value="1"/>
</dbReference>